<protein>
    <recommendedName>
        <fullName>Amino-acid acetyltransferase, mitochondrial</fullName>
        <ecNumber>2.3.1.1</ecNumber>
    </recommendedName>
    <alternativeName>
        <fullName>Arginine-requiring protein 14</fullName>
    </alternativeName>
    <alternativeName>
        <fullName>Glutamate N-acetyltransferase</fullName>
    </alternativeName>
    <alternativeName>
        <fullName>N-acetylglutamate synthase</fullName>
        <shortName>AGS</shortName>
        <shortName>NAGS</shortName>
    </alternativeName>
</protein>
<name>NAGS_NEUCR</name>
<organism>
    <name type="scientific">Neurospora crassa (strain ATCC 24698 / 74-OR23-1A / CBS 708.71 / DSM 1257 / FGSC 987)</name>
    <dbReference type="NCBI Taxonomy" id="367110"/>
    <lineage>
        <taxon>Eukaryota</taxon>
        <taxon>Fungi</taxon>
        <taxon>Dikarya</taxon>
        <taxon>Ascomycota</taxon>
        <taxon>Pezizomycotina</taxon>
        <taxon>Sordariomycetes</taxon>
        <taxon>Sordariomycetidae</taxon>
        <taxon>Sordariales</taxon>
        <taxon>Sordariaceae</taxon>
        <taxon>Neurospora</taxon>
    </lineage>
</organism>
<dbReference type="EC" id="2.3.1.1"/>
<dbReference type="EMBL" id="L35484">
    <property type="protein sequence ID" value="AAC37502.1"/>
    <property type="molecule type" value="Genomic_DNA"/>
</dbReference>
<dbReference type="EMBL" id="CM002239">
    <property type="protein sequence ID" value="ESA42856.1"/>
    <property type="molecule type" value="Genomic_DNA"/>
</dbReference>
<dbReference type="RefSeq" id="XP_011394254.1">
    <property type="nucleotide sequence ID" value="XM_011395952.1"/>
</dbReference>
<dbReference type="SMR" id="Q1K8F6"/>
<dbReference type="STRING" id="367110.Q1K8F6"/>
<dbReference type="PaxDb" id="5141-EFNCRP00000007999"/>
<dbReference type="EnsemblFungi" id="ESA42856">
    <property type="protein sequence ID" value="ESA42856"/>
    <property type="gene ID" value="NCU07682"/>
</dbReference>
<dbReference type="GeneID" id="3878463"/>
<dbReference type="KEGG" id="ncr:NCU07682"/>
<dbReference type="VEuPathDB" id="FungiDB:NCU07682"/>
<dbReference type="HOGENOM" id="CLU_013088_0_0_1"/>
<dbReference type="InParanoid" id="Q1K8F6"/>
<dbReference type="OrthoDB" id="5585968at2759"/>
<dbReference type="UniPathway" id="UPA00068">
    <property type="reaction ID" value="UER00106"/>
</dbReference>
<dbReference type="Proteomes" id="UP000001805">
    <property type="component" value="Chromosome 4, Linkage Group IV"/>
</dbReference>
<dbReference type="GO" id="GO:0005759">
    <property type="term" value="C:mitochondrial matrix"/>
    <property type="evidence" value="ECO:0000318"/>
    <property type="project" value="GO_Central"/>
</dbReference>
<dbReference type="GO" id="GO:0004042">
    <property type="term" value="F:L-glutamate N-acetyltransferase activity"/>
    <property type="evidence" value="ECO:0000318"/>
    <property type="project" value="GO_Central"/>
</dbReference>
<dbReference type="GO" id="GO:0006526">
    <property type="term" value="P:L-arginine biosynthetic process"/>
    <property type="evidence" value="ECO:0000318"/>
    <property type="project" value="GO_Central"/>
</dbReference>
<dbReference type="GO" id="GO:0006592">
    <property type="term" value="P:ornithine biosynthetic process"/>
    <property type="evidence" value="ECO:0000318"/>
    <property type="project" value="GO_Central"/>
</dbReference>
<dbReference type="CDD" id="cd04266">
    <property type="entry name" value="DUF619-NAGS-FABP"/>
    <property type="match status" value="1"/>
</dbReference>
<dbReference type="FunFam" id="3.40.630.30:FF:000049">
    <property type="entry name" value="Amino-acid acetyltransferase, mitochondrial"/>
    <property type="match status" value="1"/>
</dbReference>
<dbReference type="Gene3D" id="3.40.630.30">
    <property type="match status" value="1"/>
</dbReference>
<dbReference type="InterPro" id="IPR011190">
    <property type="entry name" value="GlcNAc_Synth_fun"/>
</dbReference>
<dbReference type="InterPro" id="IPR006855">
    <property type="entry name" value="Vertebrate-like_GNAT_dom"/>
</dbReference>
<dbReference type="PANTHER" id="PTHR23342:SF4">
    <property type="entry name" value="AMINO-ACID ACETYLTRANSFERASE, MITOCHONDRIAL"/>
    <property type="match status" value="1"/>
</dbReference>
<dbReference type="PANTHER" id="PTHR23342">
    <property type="entry name" value="N-ACETYLGLUTAMATE SYNTHASE"/>
    <property type="match status" value="1"/>
</dbReference>
<dbReference type="Pfam" id="PF04768">
    <property type="entry name" value="NAT"/>
    <property type="match status" value="1"/>
</dbReference>
<dbReference type="PIRSF" id="PIRSF007892">
    <property type="entry name" value="NAGS_fungal"/>
    <property type="match status" value="1"/>
</dbReference>
<dbReference type="PROSITE" id="PS51731">
    <property type="entry name" value="GNAT_NAGS"/>
    <property type="match status" value="1"/>
</dbReference>
<reference key="1">
    <citation type="journal article" date="1996" name="Mol. Microbiol.">
        <title>Acetylglutamate synthase from Neurospora crassa: structure and regulation of expression.</title>
        <authorList>
            <person name="Yu Y.G."/>
            <person name="Turner G.E."/>
            <person name="Weiss R.L."/>
        </authorList>
    </citation>
    <scope>NUCLEOTIDE SEQUENCE [GENOMIC DNA]</scope>
    <scope>FUNCTION</scope>
    <scope>INDUCTION</scope>
</reference>
<reference key="2">
    <citation type="journal article" date="2003" name="Nature">
        <title>The genome sequence of the filamentous fungus Neurospora crassa.</title>
        <authorList>
            <person name="Galagan J.E."/>
            <person name="Calvo S.E."/>
            <person name="Borkovich K.A."/>
            <person name="Selker E.U."/>
            <person name="Read N.D."/>
            <person name="Jaffe D.B."/>
            <person name="FitzHugh W."/>
            <person name="Ma L.-J."/>
            <person name="Smirnov S."/>
            <person name="Purcell S."/>
            <person name="Rehman B."/>
            <person name="Elkins T."/>
            <person name="Engels R."/>
            <person name="Wang S."/>
            <person name="Nielsen C.B."/>
            <person name="Butler J."/>
            <person name="Endrizzi M."/>
            <person name="Qui D."/>
            <person name="Ianakiev P."/>
            <person name="Bell-Pedersen D."/>
            <person name="Nelson M.A."/>
            <person name="Werner-Washburne M."/>
            <person name="Selitrennikoff C.P."/>
            <person name="Kinsey J.A."/>
            <person name="Braun E.L."/>
            <person name="Zelter A."/>
            <person name="Schulte U."/>
            <person name="Kothe G.O."/>
            <person name="Jedd G."/>
            <person name="Mewes H.-W."/>
            <person name="Staben C."/>
            <person name="Marcotte E."/>
            <person name="Greenberg D."/>
            <person name="Roy A."/>
            <person name="Foley K."/>
            <person name="Naylor J."/>
            <person name="Stange-Thomann N."/>
            <person name="Barrett R."/>
            <person name="Gnerre S."/>
            <person name="Kamal M."/>
            <person name="Kamvysselis M."/>
            <person name="Mauceli E.W."/>
            <person name="Bielke C."/>
            <person name="Rudd S."/>
            <person name="Frishman D."/>
            <person name="Krystofova S."/>
            <person name="Rasmussen C."/>
            <person name="Metzenberg R.L."/>
            <person name="Perkins D.D."/>
            <person name="Kroken S."/>
            <person name="Cogoni C."/>
            <person name="Macino G."/>
            <person name="Catcheside D.E.A."/>
            <person name="Li W."/>
            <person name="Pratt R.J."/>
            <person name="Osmani S.A."/>
            <person name="DeSouza C.P.C."/>
            <person name="Glass N.L."/>
            <person name="Orbach M.J."/>
            <person name="Berglund J.A."/>
            <person name="Voelker R."/>
            <person name="Yarden O."/>
            <person name="Plamann M."/>
            <person name="Seiler S."/>
            <person name="Dunlap J.C."/>
            <person name="Radford A."/>
            <person name="Aramayo R."/>
            <person name="Natvig D.O."/>
            <person name="Alex L.A."/>
            <person name="Mannhaupt G."/>
            <person name="Ebbole D.J."/>
            <person name="Freitag M."/>
            <person name="Paulsen I."/>
            <person name="Sachs M.S."/>
            <person name="Lander E.S."/>
            <person name="Nusbaum C."/>
            <person name="Birren B.W."/>
        </authorList>
    </citation>
    <scope>NUCLEOTIDE SEQUENCE [LARGE SCALE GENOMIC DNA]</scope>
    <source>
        <strain>ATCC 24698 / 74-OR23-1A / CBS 708.71 / DSM 1257 / FGSC 987</strain>
    </source>
</reference>
<reference key="3">
    <citation type="journal article" date="1986" name="J. Biol. Chem.">
        <title>N-acetyl-L-glutamate synthase of Neurospora crassa. Characteristics, localization, regulation, and genetic control.</title>
        <authorList>
            <person name="Hinde R.W."/>
            <person name="Jacobson J.A."/>
            <person name="Weiss R.L."/>
            <person name="Davis R.H."/>
        </authorList>
    </citation>
    <scope>FUNCTION</scope>
    <scope>BIOPHYSICOCHEMICAL PROPERTIES</scope>
    <scope>ACTIVITY REGULATION</scope>
    <scope>SUBCELLULAR LOCATION</scope>
</reference>
<proteinExistence type="evidence at protein level"/>
<comment type="function">
    <text evidence="4 5">N-acetylglutamate synthase involved in arginine biosynthesis.</text>
</comment>
<comment type="catalytic activity">
    <reaction>
        <text>L-glutamate + acetyl-CoA = N-acetyl-L-glutamate + CoA + H(+)</text>
        <dbReference type="Rhea" id="RHEA:24292"/>
        <dbReference type="ChEBI" id="CHEBI:15378"/>
        <dbReference type="ChEBI" id="CHEBI:29985"/>
        <dbReference type="ChEBI" id="CHEBI:44337"/>
        <dbReference type="ChEBI" id="CHEBI:57287"/>
        <dbReference type="ChEBI" id="CHEBI:57288"/>
        <dbReference type="EC" id="2.3.1.1"/>
    </reaction>
</comment>
<comment type="activity regulation">
    <text evidence="4">Inhibited by arginine.</text>
</comment>
<comment type="biophysicochemical properties">
    <kinetics>
        <KM evidence="4">6.3 nM for glutamate</KM>
    </kinetics>
    <phDependence>
        <text evidence="4">Optimum pH is 8.8-9.</text>
    </phDependence>
</comment>
<comment type="pathway">
    <text>Amino-acid biosynthesis; L-arginine biosynthesis; N(2)-acetyl-L-ornithine from L-glutamate: step 1/4.</text>
</comment>
<comment type="subcellular location">
    <subcellularLocation>
        <location evidence="4">Mitochondrion</location>
    </subcellularLocation>
</comment>
<comment type="induction">
    <text evidence="5">By histidine or arginine limitation.</text>
</comment>
<comment type="similarity">
    <text evidence="6">Belongs to the acetyltransferase family.</text>
</comment>
<evidence type="ECO:0000255" key="1"/>
<evidence type="ECO:0000255" key="2">
    <source>
        <dbReference type="PROSITE-ProRule" id="PRU00532"/>
    </source>
</evidence>
<evidence type="ECO:0000256" key="3">
    <source>
        <dbReference type="SAM" id="MobiDB-lite"/>
    </source>
</evidence>
<evidence type="ECO:0000269" key="4">
    <source>
    </source>
</evidence>
<evidence type="ECO:0000269" key="5">
    <source>
    </source>
</evidence>
<evidence type="ECO:0000305" key="6"/>
<accession>Q1K8F6</accession>
<accession>Q12643</accession>
<accession>V5IQ12</accession>
<feature type="transit peptide" description="Mitochondrion" evidence="1">
    <location>
        <begin position="1"/>
        <end position="47"/>
    </location>
</feature>
<feature type="chain" id="PRO_0000372569" description="Amino-acid acetyltransferase, mitochondrial">
    <location>
        <begin position="48"/>
        <end position="712"/>
    </location>
</feature>
<feature type="domain" description="N-acetyltransferase" evidence="2">
    <location>
        <begin position="534"/>
        <end position="702"/>
    </location>
</feature>
<feature type="region of interest" description="Disordered" evidence="3">
    <location>
        <begin position="55"/>
        <end position="99"/>
    </location>
</feature>
<feature type="compositionally biased region" description="Basic and acidic residues" evidence="3">
    <location>
        <begin position="63"/>
        <end position="74"/>
    </location>
</feature>
<feature type="compositionally biased region" description="Low complexity" evidence="3">
    <location>
        <begin position="81"/>
        <end position="93"/>
    </location>
</feature>
<sequence length="712" mass="78280">MFVRTCRSSCNAWTNATSTTQAGSLLPPNAHRSVVLTLSLQACSARTHESLIRSFASTTSQSKRQEAEAEEKRQVSPRLGPSAPRSSYPSSAEARQKRDSDREFLISVLESSATKRDARGYLQTFGSSAALTSAGQKKPSTIGILGVPASVAGRPAFVQGTEKEISVKRNEAPHVAVVKLRAPQAWDDVLLEGVAKTLTRLRDLGLLSVIVLDCDDIKPNQASSWHETVTEQTDRLLRAIGQYGFPAAEVVDSGIWKSTENPQIPSSVPSNPLYVGFGKAFTTPLANGHILVVPPRAYSDASLQYSKADANDIVIALTTFFAGLQFGQQSSDYRQLAEKVSDGQSFRKALVDRVIVIDPLGGIPSHRQGHGTQVFINLEDEFKNIQDALYEKTQPTSAGTKDAGVSARATVHLENLRLAKSTLALLPSNASVVMTSPAEAANINVSRRNQLEAKPDGFAGEVKTRTWRNPLIHNLLTDRPIYSSSLPIGRIKPTHQDEEIALSRMPTTTLAKRGLPVTIFPDPRVNRWQPPQPGVPRLRLTDTCIDLPRLVHLINDSFGRKLNVEHYLDRVKDSLAGIIIAGEYEGGAILTWETPFGLDEETAYRKGRLVPYLDKFAVLRKSQGAGGVADIVFNAMVRDAFPDGVCWRSRKDNPVNKWYFERSRGVLKLPESNWAMFWTTPEAVSNDQMMRDYEDVCRNIAPSWADTTKPAD</sequence>
<keyword id="KW-0012">Acyltransferase</keyword>
<keyword id="KW-0028">Amino-acid biosynthesis</keyword>
<keyword id="KW-0496">Mitochondrion</keyword>
<keyword id="KW-1185">Reference proteome</keyword>
<keyword id="KW-0808">Transferase</keyword>
<keyword id="KW-0809">Transit peptide</keyword>
<gene>
    <name type="primary">arg-14</name>
    <name type="ORF">NCU07682</name>
</gene>